<reference key="1">
    <citation type="journal article" date="2003" name="Nature">
        <title>Genome divergence in two Prochlorococcus ecotypes reflects oceanic niche differentiation.</title>
        <authorList>
            <person name="Rocap G."/>
            <person name="Larimer F.W."/>
            <person name="Lamerdin J.E."/>
            <person name="Malfatti S."/>
            <person name="Chain P."/>
            <person name="Ahlgren N.A."/>
            <person name="Arellano A."/>
            <person name="Coleman M."/>
            <person name="Hauser L."/>
            <person name="Hess W.R."/>
            <person name="Johnson Z.I."/>
            <person name="Land M.L."/>
            <person name="Lindell D."/>
            <person name="Post A.F."/>
            <person name="Regala W."/>
            <person name="Shah M."/>
            <person name="Shaw S.L."/>
            <person name="Steglich C."/>
            <person name="Sullivan M.B."/>
            <person name="Ting C.S."/>
            <person name="Tolonen A."/>
            <person name="Webb E.A."/>
            <person name="Zinser E.R."/>
            <person name="Chisholm S.W."/>
        </authorList>
    </citation>
    <scope>NUCLEOTIDE SEQUENCE [LARGE SCALE GENOMIC DNA]</scope>
    <source>
        <strain>MIT 9313</strain>
    </source>
</reference>
<comment type="similarity">
    <text evidence="1">Belongs to the bacterial ribosomal protein bL28 family.</text>
</comment>
<keyword id="KW-1185">Reference proteome</keyword>
<keyword id="KW-0687">Ribonucleoprotein</keyword>
<keyword id="KW-0689">Ribosomal protein</keyword>
<name>RL28_PROMM</name>
<accession>Q7V7P3</accession>
<protein>
    <recommendedName>
        <fullName evidence="1">Large ribosomal subunit protein bL28</fullName>
    </recommendedName>
    <alternativeName>
        <fullName evidence="2">50S ribosomal protein L28</fullName>
    </alternativeName>
</protein>
<gene>
    <name evidence="1" type="primary">rpmB</name>
    <name evidence="1" type="synonym">rpl28</name>
    <name type="ordered locus">PMT_0695</name>
</gene>
<sequence length="78" mass="8928">MSRVCQLTGTRANNGMAVSHSHIRTKKLQQANLQQRRLWWAEGNRWLKLRVSTRALKTIQKKGLGVYAKSLGIDLNKI</sequence>
<organism>
    <name type="scientific">Prochlorococcus marinus (strain MIT 9313)</name>
    <dbReference type="NCBI Taxonomy" id="74547"/>
    <lineage>
        <taxon>Bacteria</taxon>
        <taxon>Bacillati</taxon>
        <taxon>Cyanobacteriota</taxon>
        <taxon>Cyanophyceae</taxon>
        <taxon>Synechococcales</taxon>
        <taxon>Prochlorococcaceae</taxon>
        <taxon>Prochlorococcus</taxon>
    </lineage>
</organism>
<proteinExistence type="inferred from homology"/>
<evidence type="ECO:0000255" key="1">
    <source>
        <dbReference type="HAMAP-Rule" id="MF_00373"/>
    </source>
</evidence>
<evidence type="ECO:0000305" key="2"/>
<dbReference type="EMBL" id="BX548175">
    <property type="protein sequence ID" value="CAE20870.1"/>
    <property type="molecule type" value="Genomic_DNA"/>
</dbReference>
<dbReference type="RefSeq" id="WP_011130073.1">
    <property type="nucleotide sequence ID" value="NC_005071.1"/>
</dbReference>
<dbReference type="SMR" id="Q7V7P3"/>
<dbReference type="KEGG" id="pmt:PMT_0695"/>
<dbReference type="eggNOG" id="COG0227">
    <property type="taxonomic scope" value="Bacteria"/>
</dbReference>
<dbReference type="HOGENOM" id="CLU_064548_3_0_3"/>
<dbReference type="OrthoDB" id="9805609at2"/>
<dbReference type="Proteomes" id="UP000001423">
    <property type="component" value="Chromosome"/>
</dbReference>
<dbReference type="GO" id="GO:1990904">
    <property type="term" value="C:ribonucleoprotein complex"/>
    <property type="evidence" value="ECO:0007669"/>
    <property type="project" value="UniProtKB-KW"/>
</dbReference>
<dbReference type="GO" id="GO:0005840">
    <property type="term" value="C:ribosome"/>
    <property type="evidence" value="ECO:0007669"/>
    <property type="project" value="UniProtKB-KW"/>
</dbReference>
<dbReference type="GO" id="GO:0003735">
    <property type="term" value="F:structural constituent of ribosome"/>
    <property type="evidence" value="ECO:0007669"/>
    <property type="project" value="InterPro"/>
</dbReference>
<dbReference type="GO" id="GO:0006412">
    <property type="term" value="P:translation"/>
    <property type="evidence" value="ECO:0007669"/>
    <property type="project" value="UniProtKB-UniRule"/>
</dbReference>
<dbReference type="Gene3D" id="2.30.170.40">
    <property type="entry name" value="Ribosomal protein L28/L24"/>
    <property type="match status" value="1"/>
</dbReference>
<dbReference type="HAMAP" id="MF_00373">
    <property type="entry name" value="Ribosomal_bL28"/>
    <property type="match status" value="1"/>
</dbReference>
<dbReference type="InterPro" id="IPR026569">
    <property type="entry name" value="Ribosomal_bL28"/>
</dbReference>
<dbReference type="InterPro" id="IPR034704">
    <property type="entry name" value="Ribosomal_bL28/bL31-like_sf"/>
</dbReference>
<dbReference type="InterPro" id="IPR001383">
    <property type="entry name" value="Ribosomal_bL28_bact-type"/>
</dbReference>
<dbReference type="InterPro" id="IPR037147">
    <property type="entry name" value="Ribosomal_bL28_sf"/>
</dbReference>
<dbReference type="NCBIfam" id="TIGR00009">
    <property type="entry name" value="L28"/>
    <property type="match status" value="1"/>
</dbReference>
<dbReference type="PANTHER" id="PTHR13528">
    <property type="entry name" value="39S RIBOSOMAL PROTEIN L28, MITOCHONDRIAL"/>
    <property type="match status" value="1"/>
</dbReference>
<dbReference type="PANTHER" id="PTHR13528:SF2">
    <property type="entry name" value="LARGE RIBOSOMAL SUBUNIT PROTEIN BL28M"/>
    <property type="match status" value="1"/>
</dbReference>
<dbReference type="Pfam" id="PF00830">
    <property type="entry name" value="Ribosomal_L28"/>
    <property type="match status" value="1"/>
</dbReference>
<dbReference type="SUPFAM" id="SSF143800">
    <property type="entry name" value="L28p-like"/>
    <property type="match status" value="1"/>
</dbReference>
<feature type="chain" id="PRO_0000178529" description="Large ribosomal subunit protein bL28">
    <location>
        <begin position="1"/>
        <end position="78"/>
    </location>
</feature>